<evidence type="ECO:0000255" key="1">
    <source>
        <dbReference type="PROSITE-ProRule" id="PRU00062"/>
    </source>
</evidence>
<evidence type="ECO:0000256" key="2">
    <source>
        <dbReference type="SAM" id="MobiDB-lite"/>
    </source>
</evidence>
<evidence type="ECO:0000269" key="3">
    <source>
    </source>
</evidence>
<evidence type="ECO:0000269" key="4">
    <source>
    </source>
</evidence>
<dbReference type="EMBL" id="CU329670">
    <property type="protein sequence ID" value="CAA90853.1"/>
    <property type="molecule type" value="Genomic_DNA"/>
</dbReference>
<dbReference type="PIR" id="T38365">
    <property type="entry name" value="S62411"/>
</dbReference>
<dbReference type="RefSeq" id="NP_592943.1">
    <property type="nucleotide sequence ID" value="NM_001018344.2"/>
</dbReference>
<dbReference type="SMR" id="Q09763"/>
<dbReference type="BioGRID" id="279089">
    <property type="interactions" value="48"/>
</dbReference>
<dbReference type="FunCoup" id="Q09763">
    <property type="interactions" value="422"/>
</dbReference>
<dbReference type="IntAct" id="Q09763">
    <property type="interactions" value="2"/>
</dbReference>
<dbReference type="MINT" id="Q09763"/>
<dbReference type="STRING" id="284812.Q09763"/>
<dbReference type="iPTMnet" id="Q09763"/>
<dbReference type="PaxDb" id="4896-SPAC24H6.09.1"/>
<dbReference type="EnsemblFungi" id="SPAC24H6.09.1">
    <property type="protein sequence ID" value="SPAC24H6.09.1:pep"/>
    <property type="gene ID" value="SPAC24H6.09"/>
</dbReference>
<dbReference type="GeneID" id="2542635"/>
<dbReference type="KEGG" id="spo:2542635"/>
<dbReference type="PomBase" id="SPAC24H6.09">
    <property type="gene designation" value="gef1"/>
</dbReference>
<dbReference type="VEuPathDB" id="FungiDB:SPAC24H6.09"/>
<dbReference type="eggNOG" id="KOG3519">
    <property type="taxonomic scope" value="Eukaryota"/>
</dbReference>
<dbReference type="HOGENOM" id="CLU_369673_0_0_1"/>
<dbReference type="InParanoid" id="Q09763"/>
<dbReference type="OMA" id="KWREKPA"/>
<dbReference type="PhylomeDB" id="Q09763"/>
<dbReference type="Reactome" id="R-SPO-416482">
    <property type="pathway name" value="G alpha (12/13) signalling events"/>
</dbReference>
<dbReference type="PRO" id="PR:Q09763"/>
<dbReference type="Proteomes" id="UP000002485">
    <property type="component" value="Chromosome I"/>
</dbReference>
<dbReference type="GO" id="GO:0051285">
    <property type="term" value="C:cell cortex of cell tip"/>
    <property type="evidence" value="ECO:0000314"/>
    <property type="project" value="PomBase"/>
</dbReference>
<dbReference type="GO" id="GO:1902716">
    <property type="term" value="C:cell cortex of growing cell tip"/>
    <property type="evidence" value="ECO:0000314"/>
    <property type="project" value="PomBase"/>
</dbReference>
<dbReference type="GO" id="GO:0032153">
    <property type="term" value="C:cell division site"/>
    <property type="evidence" value="ECO:0000314"/>
    <property type="project" value="PomBase"/>
</dbReference>
<dbReference type="GO" id="GO:0051286">
    <property type="term" value="C:cell tip"/>
    <property type="evidence" value="ECO:0000314"/>
    <property type="project" value="PomBase"/>
</dbReference>
<dbReference type="GO" id="GO:0005737">
    <property type="term" value="C:cytoplasm"/>
    <property type="evidence" value="ECO:0000314"/>
    <property type="project" value="PomBase"/>
</dbReference>
<dbReference type="GO" id="GO:0005829">
    <property type="term" value="C:cytosol"/>
    <property type="evidence" value="ECO:0007005"/>
    <property type="project" value="PomBase"/>
</dbReference>
<dbReference type="GO" id="GO:0000935">
    <property type="term" value="C:division septum"/>
    <property type="evidence" value="ECO:0000314"/>
    <property type="project" value="PomBase"/>
</dbReference>
<dbReference type="GO" id="GO:0061645">
    <property type="term" value="C:endocytic patch"/>
    <property type="evidence" value="ECO:0000314"/>
    <property type="project" value="PomBase"/>
</dbReference>
<dbReference type="GO" id="GO:0031097">
    <property type="term" value="C:medial cortex"/>
    <property type="evidence" value="ECO:0000314"/>
    <property type="project" value="PomBase"/>
</dbReference>
<dbReference type="GO" id="GO:0110085">
    <property type="term" value="C:mitotic actomyosin contractile ring"/>
    <property type="evidence" value="ECO:0000314"/>
    <property type="project" value="PomBase"/>
</dbReference>
<dbReference type="GO" id="GO:0005085">
    <property type="term" value="F:guanyl-nucleotide exchange factor activity"/>
    <property type="evidence" value="ECO:0000314"/>
    <property type="project" value="PomBase"/>
</dbReference>
<dbReference type="GO" id="GO:0051519">
    <property type="term" value="P:activation of bipolar cell growth"/>
    <property type="evidence" value="ECO:0000315"/>
    <property type="project" value="PomBase"/>
</dbReference>
<dbReference type="GO" id="GO:0000917">
    <property type="term" value="P:division septum assembly"/>
    <property type="evidence" value="ECO:0007669"/>
    <property type="project" value="UniProtKB-KW"/>
</dbReference>
<dbReference type="GO" id="GO:0061245">
    <property type="term" value="P:establishment or maintenance of bipolar cell polarity"/>
    <property type="evidence" value="ECO:0000316"/>
    <property type="project" value="PomBase"/>
</dbReference>
<dbReference type="GO" id="GO:0045806">
    <property type="term" value="P:negative regulation of endocytosis"/>
    <property type="evidence" value="ECO:0000315"/>
    <property type="project" value="PomBase"/>
</dbReference>
<dbReference type="GO" id="GO:1903473">
    <property type="term" value="P:positive regulation of mitotic actomyosin contractile ring contraction"/>
    <property type="evidence" value="ECO:0000315"/>
    <property type="project" value="PomBase"/>
</dbReference>
<dbReference type="GO" id="GO:0031991">
    <property type="term" value="P:regulation of actomyosin contractile ring contraction"/>
    <property type="evidence" value="ECO:0000318"/>
    <property type="project" value="GO_Central"/>
</dbReference>
<dbReference type="GO" id="GO:0032955">
    <property type="term" value="P:regulation of division septum assembly"/>
    <property type="evidence" value="ECO:0000315"/>
    <property type="project" value="PomBase"/>
</dbReference>
<dbReference type="GO" id="GO:2000114">
    <property type="term" value="P:regulation of establishment of cell polarity"/>
    <property type="evidence" value="ECO:0000269"/>
    <property type="project" value="PomBase"/>
</dbReference>
<dbReference type="GO" id="GO:2000100">
    <property type="term" value="P:regulation of establishment or maintenance of bipolar cell polarity regulating cell shape"/>
    <property type="evidence" value="ECO:0000315"/>
    <property type="project" value="PomBase"/>
</dbReference>
<dbReference type="CDD" id="cd00160">
    <property type="entry name" value="RhoGEF"/>
    <property type="match status" value="1"/>
</dbReference>
<dbReference type="FunFam" id="1.20.900.10:FF:000038">
    <property type="entry name" value="Myosin-M heavy chain"/>
    <property type="match status" value="1"/>
</dbReference>
<dbReference type="Gene3D" id="1.20.900.10">
    <property type="entry name" value="Dbl homology (DH) domain"/>
    <property type="match status" value="1"/>
</dbReference>
<dbReference type="InterPro" id="IPR035899">
    <property type="entry name" value="DBL_dom_sf"/>
</dbReference>
<dbReference type="InterPro" id="IPR000219">
    <property type="entry name" value="DH_dom"/>
</dbReference>
<dbReference type="InterPro" id="IPR051492">
    <property type="entry name" value="Dynamin-Rho_GEF"/>
</dbReference>
<dbReference type="PANTHER" id="PTHR22834">
    <property type="entry name" value="NUCLEAR FUSION PROTEIN FUS2"/>
    <property type="match status" value="1"/>
</dbReference>
<dbReference type="PANTHER" id="PTHR22834:SF20">
    <property type="entry name" value="SH3 DOMAIN-CONTAINING PROTEIN"/>
    <property type="match status" value="1"/>
</dbReference>
<dbReference type="Pfam" id="PF00621">
    <property type="entry name" value="RhoGEF"/>
    <property type="match status" value="1"/>
</dbReference>
<dbReference type="SMART" id="SM00325">
    <property type="entry name" value="RhoGEF"/>
    <property type="match status" value="1"/>
</dbReference>
<dbReference type="SUPFAM" id="SSF48065">
    <property type="entry name" value="DBL homology domain (DH-domain)"/>
    <property type="match status" value="1"/>
</dbReference>
<dbReference type="PROSITE" id="PS50010">
    <property type="entry name" value="DH_2"/>
    <property type="match status" value="1"/>
</dbReference>
<reference key="1">
    <citation type="journal article" date="2002" name="Nature">
        <title>The genome sequence of Schizosaccharomyces pombe.</title>
        <authorList>
            <person name="Wood V."/>
            <person name="Gwilliam R."/>
            <person name="Rajandream M.A."/>
            <person name="Lyne M.H."/>
            <person name="Lyne R."/>
            <person name="Stewart A."/>
            <person name="Sgouros J.G."/>
            <person name="Peat N."/>
            <person name="Hayles J."/>
            <person name="Baker S.G."/>
            <person name="Basham D."/>
            <person name="Bowman S."/>
            <person name="Brooks K."/>
            <person name="Brown D."/>
            <person name="Brown S."/>
            <person name="Chillingworth T."/>
            <person name="Churcher C.M."/>
            <person name="Collins M."/>
            <person name="Connor R."/>
            <person name="Cronin A."/>
            <person name="Davis P."/>
            <person name="Feltwell T."/>
            <person name="Fraser A."/>
            <person name="Gentles S."/>
            <person name="Goble A."/>
            <person name="Hamlin N."/>
            <person name="Harris D.E."/>
            <person name="Hidalgo J."/>
            <person name="Hodgson G."/>
            <person name="Holroyd S."/>
            <person name="Hornsby T."/>
            <person name="Howarth S."/>
            <person name="Huckle E.J."/>
            <person name="Hunt S."/>
            <person name="Jagels K."/>
            <person name="James K.D."/>
            <person name="Jones L."/>
            <person name="Jones M."/>
            <person name="Leather S."/>
            <person name="McDonald S."/>
            <person name="McLean J."/>
            <person name="Mooney P."/>
            <person name="Moule S."/>
            <person name="Mungall K.L."/>
            <person name="Murphy L.D."/>
            <person name="Niblett D."/>
            <person name="Odell C."/>
            <person name="Oliver K."/>
            <person name="O'Neil S."/>
            <person name="Pearson D."/>
            <person name="Quail M.A."/>
            <person name="Rabbinowitsch E."/>
            <person name="Rutherford K.M."/>
            <person name="Rutter S."/>
            <person name="Saunders D."/>
            <person name="Seeger K."/>
            <person name="Sharp S."/>
            <person name="Skelton J."/>
            <person name="Simmonds M.N."/>
            <person name="Squares R."/>
            <person name="Squares S."/>
            <person name="Stevens K."/>
            <person name="Taylor K."/>
            <person name="Taylor R.G."/>
            <person name="Tivey A."/>
            <person name="Walsh S.V."/>
            <person name="Warren T."/>
            <person name="Whitehead S."/>
            <person name="Woodward J.R."/>
            <person name="Volckaert G."/>
            <person name="Aert R."/>
            <person name="Robben J."/>
            <person name="Grymonprez B."/>
            <person name="Weltjens I."/>
            <person name="Vanstreels E."/>
            <person name="Rieger M."/>
            <person name="Schaefer M."/>
            <person name="Mueller-Auer S."/>
            <person name="Gabel C."/>
            <person name="Fuchs M."/>
            <person name="Duesterhoeft A."/>
            <person name="Fritzc C."/>
            <person name="Holzer E."/>
            <person name="Moestl D."/>
            <person name="Hilbert H."/>
            <person name="Borzym K."/>
            <person name="Langer I."/>
            <person name="Beck A."/>
            <person name="Lehrach H."/>
            <person name="Reinhardt R."/>
            <person name="Pohl T.M."/>
            <person name="Eger P."/>
            <person name="Zimmermann W."/>
            <person name="Wedler H."/>
            <person name="Wambutt R."/>
            <person name="Purnelle B."/>
            <person name="Goffeau A."/>
            <person name="Cadieu E."/>
            <person name="Dreano S."/>
            <person name="Gloux S."/>
            <person name="Lelaure V."/>
            <person name="Mottier S."/>
            <person name="Galibert F."/>
            <person name="Aves S.J."/>
            <person name="Xiang Z."/>
            <person name="Hunt C."/>
            <person name="Moore K."/>
            <person name="Hurst S.M."/>
            <person name="Lucas M."/>
            <person name="Rochet M."/>
            <person name="Gaillardin C."/>
            <person name="Tallada V.A."/>
            <person name="Garzon A."/>
            <person name="Thode G."/>
            <person name="Daga R.R."/>
            <person name="Cruzado L."/>
            <person name="Jimenez J."/>
            <person name="Sanchez M."/>
            <person name="del Rey F."/>
            <person name="Benito J."/>
            <person name="Dominguez A."/>
            <person name="Revuelta J.L."/>
            <person name="Moreno S."/>
            <person name="Armstrong J."/>
            <person name="Forsburg S.L."/>
            <person name="Cerutti L."/>
            <person name="Lowe T."/>
            <person name="McCombie W.R."/>
            <person name="Paulsen I."/>
            <person name="Potashkin J."/>
            <person name="Shpakovski G.V."/>
            <person name="Ussery D."/>
            <person name="Barrell B.G."/>
            <person name="Nurse P."/>
        </authorList>
    </citation>
    <scope>NUCLEOTIDE SEQUENCE [LARGE SCALE GENOMIC DNA]</scope>
    <source>
        <strain>972 / ATCC 24843</strain>
    </source>
</reference>
<reference key="2">
    <citation type="journal article" date="2003" name="Mol. Biol. Cell">
        <title>Gef1p, a new guanine nucleotide exchange factor for Cdc42p, regulates polarity in Schizosaccharomyces pombe.</title>
        <authorList>
            <person name="Coll P.M."/>
            <person name="Trillo Y."/>
            <person name="Ametzazurra A."/>
            <person name="Perez P."/>
        </authorList>
    </citation>
    <scope>FUNCTION</scope>
    <scope>INTERACTION WITH CDC42</scope>
    <scope>SUBCELLULAR LOCATION</scope>
</reference>
<reference key="3">
    <citation type="journal article" date="2003" name="Mol. Biol. Cell">
        <title>Gef1p and Scd1p, the Two GDP-GTP exchange factors for Cdc42p, form a ring structure that shrinks during cytokinesis in Schizosaccharomyces pombe.</title>
        <authorList>
            <person name="Hirota K."/>
            <person name="Tanaka K."/>
            <person name="Ohta K."/>
            <person name="Yamamoto M."/>
        </authorList>
    </citation>
    <scope>FUNCTION</scope>
    <scope>INTERACTION WITH CDC42</scope>
</reference>
<name>GEF1_SCHPO</name>
<accession>Q09763</accession>
<protein>
    <recommendedName>
        <fullName>Rho guanine nucleotide exchange factor gef1</fullName>
    </recommendedName>
</protein>
<gene>
    <name type="primary">gef1</name>
    <name type="ORF">SPAC24H6.09</name>
</gene>
<keyword id="KW-0131">Cell cycle</keyword>
<keyword id="KW-0132">Cell division</keyword>
<keyword id="KW-0963">Cytoplasm</keyword>
<keyword id="KW-0344">Guanine-nucleotide releasing factor</keyword>
<keyword id="KW-1185">Reference proteome</keyword>
<keyword id="KW-0717">Septation</keyword>
<organism>
    <name type="scientific">Schizosaccharomyces pombe (strain 972 / ATCC 24843)</name>
    <name type="common">Fission yeast</name>
    <dbReference type="NCBI Taxonomy" id="284812"/>
    <lineage>
        <taxon>Eukaryota</taxon>
        <taxon>Fungi</taxon>
        <taxon>Dikarya</taxon>
        <taxon>Ascomycota</taxon>
        <taxon>Taphrinomycotina</taxon>
        <taxon>Schizosaccharomycetes</taxon>
        <taxon>Schizosaccharomycetales</taxon>
        <taxon>Schizosaccharomycetaceae</taxon>
        <taxon>Schizosaccharomyces</taxon>
    </lineage>
</organism>
<comment type="function">
    <text evidence="3 4">Has a role in the control of cell polarity and cytokinesis. Involved in bipolar growth, via modulation of cdc42-shk1-orb6 signaling, and septum formation. Stimulates guanine nucleotide exchange of cdc42.</text>
</comment>
<comment type="subunit">
    <text evidence="3 4">Interacts with cdc42.</text>
</comment>
<comment type="interaction">
    <interactant intactId="EBI-1556299">
        <id>Q09763</id>
    </interactant>
    <interactant intactId="EBI-767502">
        <id>Q01112</id>
        <label>cdc42</label>
    </interactant>
    <organismsDiffer>false</organismsDiffer>
    <experiments>7</experiments>
</comment>
<comment type="interaction">
    <interactant intactId="EBI-1556299">
        <id>Q09763</id>
    </interactant>
    <interactant intactId="EBI-1556284">
        <id>Q9UUM7</id>
        <label>hob3</label>
    </interactant>
    <organismsDiffer>false</organismsDiffer>
    <experiments>5</experiments>
</comment>
<comment type="subcellular location">
    <subcellularLocation>
        <location evidence="3">Cytoplasm</location>
    </subcellularLocation>
</comment>
<proteinExistence type="evidence at protein level"/>
<sequence>METLKADLSDMSDSPEYFETLANRDLPRLPGTSKLHRAACIKRKSINLSLPSNSYSLSYRQSDDTDGDVSESQSEYRLSSGRRSRASFARALQDPQTPNTPPVSSQHRRFFSEGSFNLPNSNMSHSLNGDSTASNSSTLTPNRIYGDRNRQDYAQSSRYTLPSLPSSPSYNCPTTLRKIHTNTSSNGTSRRVSGLGSFMAQNSSETSSNRTSAYLPGSSTDEQEKRSSVTLASMPSSHSSTASLLSPLDTTSFSTKLDSTILALETDESLSRTISYATTSLPSTPGKRLSKESLAMSEASSINPEYKRIKKRANLIKELVTTEAAYLNDLIAIQQSYGLRVKECSALNPVDAQTVFGDIESLLTFTVEFHSRLYQAGEGSWRVNLDTQLIDPLPCNLGLIFLESLSEIGQIYTGYCNRQDSVFKIITKWREKPATASWIMEGDKIVQKYTNAWDLGSLIIKPLQRLLKYPLLLQKIIDVTPESSSERPDLVLSYQLLQELISGINQKQKPSHKRGSLSASHKRDAAWSLLYKATSNKSRPTTTSTELKTDARLNFQRQVLQDFRQRFAILKALHATLETWYVTVHRGFSVFEKVLAELEGLSALEPEDKPVDTWRKYHLLAHMMTANLPSQIQTSLNSSILNPITNILRVIQKVIQFIISAEFVIPAQKLEAISTLVEKEFHSVVYHFIGIQRSLYENYAQGFLFLIPQDMRDSILEETQDYAELVRAFEPMHYDDEVLLEELMKSVSLAARV</sequence>
<feature type="chain" id="PRO_0000080988" description="Rho guanine nucleotide exchange factor gef1">
    <location>
        <begin position="1"/>
        <end position="753"/>
    </location>
</feature>
<feature type="domain" description="DH" evidence="1">
    <location>
        <begin position="311"/>
        <end position="507"/>
    </location>
</feature>
<feature type="region of interest" description="Disordered" evidence="2">
    <location>
        <begin position="52"/>
        <end position="150"/>
    </location>
</feature>
<feature type="region of interest" description="Disordered" evidence="2">
    <location>
        <begin position="175"/>
        <end position="194"/>
    </location>
</feature>
<feature type="region of interest" description="Disordered" evidence="2">
    <location>
        <begin position="200"/>
        <end position="245"/>
    </location>
</feature>
<feature type="compositionally biased region" description="Polar residues" evidence="2">
    <location>
        <begin position="94"/>
        <end position="105"/>
    </location>
</feature>
<feature type="compositionally biased region" description="Polar residues" evidence="2">
    <location>
        <begin position="114"/>
        <end position="141"/>
    </location>
</feature>
<feature type="compositionally biased region" description="Polar residues" evidence="2">
    <location>
        <begin position="181"/>
        <end position="191"/>
    </location>
</feature>
<feature type="compositionally biased region" description="Polar residues" evidence="2">
    <location>
        <begin position="200"/>
        <end position="220"/>
    </location>
</feature>
<feature type="compositionally biased region" description="Low complexity" evidence="2">
    <location>
        <begin position="230"/>
        <end position="245"/>
    </location>
</feature>